<proteinExistence type="evidence at protein level"/>
<dbReference type="PIR" id="A01206">
    <property type="entry name" value="TIBOR"/>
</dbReference>
<dbReference type="SMR" id="P00975"/>
<dbReference type="FunCoup" id="P00975">
    <property type="interactions" value="10"/>
</dbReference>
<dbReference type="MEROPS" id="I02.004"/>
<dbReference type="InParanoid" id="P00975"/>
<dbReference type="Proteomes" id="UP000009136">
    <property type="component" value="Unplaced"/>
</dbReference>
<dbReference type="GO" id="GO:0005615">
    <property type="term" value="C:extracellular space"/>
    <property type="evidence" value="ECO:0000318"/>
    <property type="project" value="GO_Central"/>
</dbReference>
<dbReference type="GO" id="GO:0004867">
    <property type="term" value="F:serine-type endopeptidase inhibitor activity"/>
    <property type="evidence" value="ECO:0000318"/>
    <property type="project" value="GO_Central"/>
</dbReference>
<dbReference type="CDD" id="cd22592">
    <property type="entry name" value="Kunitz_BPTI"/>
    <property type="match status" value="1"/>
</dbReference>
<dbReference type="FunFam" id="4.10.410.10:FF:000005">
    <property type="entry name" value="Pancreatic trypsin inhibitor"/>
    <property type="match status" value="1"/>
</dbReference>
<dbReference type="Gene3D" id="4.10.410.10">
    <property type="entry name" value="Pancreatic trypsin inhibitor Kunitz domain"/>
    <property type="match status" value="1"/>
</dbReference>
<dbReference type="InterPro" id="IPR002223">
    <property type="entry name" value="Kunitz_BPTI"/>
</dbReference>
<dbReference type="InterPro" id="IPR036880">
    <property type="entry name" value="Kunitz_BPTI_sf"/>
</dbReference>
<dbReference type="InterPro" id="IPR020901">
    <property type="entry name" value="Prtase_inh_Kunz-CS"/>
</dbReference>
<dbReference type="InterPro" id="IPR050098">
    <property type="entry name" value="TFPI/VKTCI-like"/>
</dbReference>
<dbReference type="PANTHER" id="PTHR10083">
    <property type="entry name" value="KUNITZ-TYPE PROTEASE INHIBITOR-RELATED"/>
    <property type="match status" value="1"/>
</dbReference>
<dbReference type="PANTHER" id="PTHR10083:SF367">
    <property type="entry name" value="SPLEEN TRYPSIN INHIBITOR I"/>
    <property type="match status" value="1"/>
</dbReference>
<dbReference type="Pfam" id="PF00014">
    <property type="entry name" value="Kunitz_BPTI"/>
    <property type="match status" value="1"/>
</dbReference>
<dbReference type="PRINTS" id="PR00759">
    <property type="entry name" value="BASICPTASE"/>
</dbReference>
<dbReference type="SMART" id="SM00131">
    <property type="entry name" value="KU"/>
    <property type="match status" value="1"/>
</dbReference>
<dbReference type="SUPFAM" id="SSF57362">
    <property type="entry name" value="BPTI-like"/>
    <property type="match status" value="1"/>
</dbReference>
<dbReference type="PROSITE" id="PS00280">
    <property type="entry name" value="BPTI_KUNITZ_1"/>
    <property type="match status" value="1"/>
</dbReference>
<dbReference type="PROSITE" id="PS50279">
    <property type="entry name" value="BPTI_KUNITZ_2"/>
    <property type="match status" value="1"/>
</dbReference>
<feature type="chain" id="PRO_0000155408" description="Serum basic protease inhibitor">
    <location>
        <begin position="1"/>
        <end position="60"/>
    </location>
</feature>
<feature type="domain" description="BPTI/Kunitz inhibitor" evidence="1">
    <location>
        <begin position="7"/>
        <end position="57"/>
    </location>
</feature>
<feature type="site" description="Reactive bond">
    <location>
        <begin position="17"/>
        <end position="18"/>
    </location>
</feature>
<feature type="disulfide bond" evidence="1">
    <location>
        <begin position="7"/>
        <end position="57"/>
    </location>
</feature>
<feature type="disulfide bond" evidence="1">
    <location>
        <begin position="16"/>
        <end position="40"/>
    </location>
</feature>
<feature type="disulfide bond" evidence="1">
    <location>
        <begin position="32"/>
        <end position="53"/>
    </location>
</feature>
<keyword id="KW-0903">Direct protein sequencing</keyword>
<keyword id="KW-1015">Disulfide bond</keyword>
<keyword id="KW-0646">Protease inhibitor</keyword>
<keyword id="KW-1185">Reference proteome</keyword>
<keyword id="KW-0964">Secreted</keyword>
<keyword id="KW-0722">Serine protease inhibitor</keyword>
<comment type="function">
    <text>This inhibitor has activity very similar to that of the basic protease inhibitor from bovine tissues.</text>
</comment>
<comment type="subcellular location">
    <subcellularLocation>
        <location>Secreted</location>
    </subcellularLocation>
</comment>
<evidence type="ECO:0000255" key="1">
    <source>
        <dbReference type="PROSITE-ProRule" id="PRU00031"/>
    </source>
</evidence>
<organism>
    <name type="scientific">Bos taurus</name>
    <name type="common">Bovine</name>
    <dbReference type="NCBI Taxonomy" id="9913"/>
    <lineage>
        <taxon>Eukaryota</taxon>
        <taxon>Metazoa</taxon>
        <taxon>Chordata</taxon>
        <taxon>Craniata</taxon>
        <taxon>Vertebrata</taxon>
        <taxon>Euteleostomi</taxon>
        <taxon>Mammalia</taxon>
        <taxon>Eutheria</taxon>
        <taxon>Laurasiatheria</taxon>
        <taxon>Artiodactyla</taxon>
        <taxon>Ruminantia</taxon>
        <taxon>Pecora</taxon>
        <taxon>Bovidae</taxon>
        <taxon>Bovinae</taxon>
        <taxon>Bos</taxon>
    </lineage>
</organism>
<protein>
    <recommendedName>
        <fullName>Serum basic protease inhibitor</fullName>
        <shortName>Serum BPI</shortName>
    </recommendedName>
</protein>
<name>IBPS_BOVIN</name>
<reference key="1">
    <citation type="journal article" date="1980" name="FEBS Lett.">
        <title>A new Kunitz-type inhibitor from bovine serum amino acid sequence determination.</title>
        <authorList>
            <person name="Wachter E."/>
            <person name="Deppner K."/>
            <person name="Hochstrasser K."/>
            <person name="Lempart K."/>
            <person name="Geiger R."/>
        </authorList>
    </citation>
    <scope>PROTEIN SEQUENCE</scope>
</reference>
<sequence length="60" mass="6647">TERPDFCLEPPYTGPCKAAMIRYFYNAKAGFCETFVYGGCRAKSNNFKSAEDCMRTCGGA</sequence>
<accession>P00975</accession>